<protein>
    <recommendedName>
        <fullName>Death domain-associated protein 6</fullName>
    </recommendedName>
    <alternativeName>
        <fullName>Daxx</fullName>
    </alternativeName>
</protein>
<organism>
    <name type="scientific">Rattus norvegicus</name>
    <name type="common">Rat</name>
    <dbReference type="NCBI Taxonomy" id="10116"/>
    <lineage>
        <taxon>Eukaryota</taxon>
        <taxon>Metazoa</taxon>
        <taxon>Chordata</taxon>
        <taxon>Craniata</taxon>
        <taxon>Vertebrata</taxon>
        <taxon>Euteleostomi</taxon>
        <taxon>Mammalia</taxon>
        <taxon>Eutheria</taxon>
        <taxon>Euarchontoglires</taxon>
        <taxon>Glires</taxon>
        <taxon>Rodentia</taxon>
        <taxon>Myomorpha</taxon>
        <taxon>Muroidea</taxon>
        <taxon>Muridae</taxon>
        <taxon>Murinae</taxon>
        <taxon>Rattus</taxon>
    </lineage>
</organism>
<sequence length="731" mass="80687">MATDDSIIVLDDDDEDEAAAQPGPSNPASNPVSPGPEASGPSESHGDGGSSNSGSRKCYKLENEKLFEEFLELCKMQTSDHPEVVPFLHKLQQRAQSAFLASAEFRNILSRVLSRSRNRPAKLYVYINELCTVLKAHSIKKKLNLAPAASAESSGDNPPTDPPSDLTNTETTASEASRTRGSRRQIQRLEQLLALYVAEIQRLQEKELDLSELDDPDSSYLQEARLKRKLIRLFGRLCDLKDCSSLTGKVIEQRIPYRGTRYPEVNRRIERLINKPGPDTFPDYGDVLRAVEKAATRHSLGLPRQQLQLLAQDAFRDVGVRLQERRHLDLIYNFGCHLTDDYRPGVDPALTDPTLARRLRENRTLAMSRLDEVISKYAMMQDKSEEGERQKRRARLLATSQSSDLPKASSDSGEGPSGVASQEDPTTPKAETEDEEDDEESDDEEEEEEEEEEEATEDEDEDLEQLQEDQDDEEEEEGDNEDDKSPASPSPIFRRKEFSNPQKGSGPQEEQQERGLTGTPASPLEASPGLPSTDAESSGEQLQERLLAGESPVSQLSELDMEALPEETIPSPEERGISSSRRKSDSSLPTILENGAAMVTSTSFNGRVSSHPCRDASPPSKRFRKEKKQLGPGPLGNSYVKKQTMAQQDSGWKISVLSTPSSPLASVGPVADSSTRVDSPSHELVTSSLCNPSPSLILQTPQSQSPRPCIYKTSVATQCDPEEIIVLSDSD</sequence>
<reference key="1">
    <citation type="submission" date="2001-07" db="EMBL/GenBank/DDBJ databases">
        <title>Cloning and characterization of rat Daxx that enhances the transcription activity of hERalpha.</title>
        <authorList>
            <person name="Mizuta H."/>
            <person name="Usui T."/>
            <person name="Nakamura Y."/>
            <person name="Murabe H."/>
            <person name="Nakao K."/>
        </authorList>
    </citation>
    <scope>NUCLEOTIDE SEQUENCE [MRNA]</scope>
</reference>
<reference key="2">
    <citation type="journal article" date="2012" name="Nat. Commun.">
        <title>Quantitative maps of protein phosphorylation sites across 14 different rat organs and tissues.</title>
        <authorList>
            <person name="Lundby A."/>
            <person name="Secher A."/>
            <person name="Lage K."/>
            <person name="Nordsborg N.B."/>
            <person name="Dmytriyev A."/>
            <person name="Lundby C."/>
            <person name="Olsen J.V."/>
        </authorList>
    </citation>
    <scope>PHOSPHORYLATION [LARGE SCALE ANALYSIS] AT SER-488; SER-490; SER-527; SER-551 AND SER-571</scope>
    <scope>IDENTIFICATION BY MASS SPECTROMETRY [LARGE SCALE ANALYSIS]</scope>
</reference>
<comment type="function">
    <text evidence="1 3">Transcription corepressor known to repress transcriptional potential of several sumoylated transcription factors. Down-regulates basal and activated transcription. Its transcription repressor activity is modulated by recruiting it to subnuclear compartments like the nucleolus or PML/POD/ND10 nuclear bodies through interactions with MCSR1 and PML, respectively. Seems to regulate transcription in PML/POD/ND10 nuclear bodies together with PML and may influence TNFRSF6-dependent apoptosis thereby. Inhibits transcriptional activation of PAX3 and ETS1 through direct protein-protein interactions. Modulates PAX5 activity; the function seems to involve CREBBP. Acts as an adapter protein in a MDM2-DAXX-USP7 complex by regulating the RING-finger E3 ligase MDM2 ubiquitination activity. Under non-stress condition, in association with the deubiquitinating USP7, prevents MDM2 self-ubiquitination and enhances the intrinsic E3 ligase activity of MDM2 towards TP53, thereby promoting TP53 ubiquitination and subsequent proteasomal degradation. Upon DNA damage, its association with MDM2 and USP7 is disrupted, resulting in increased MDM2 autoubiquitination and consequently, MDM2 degradation, which leads to TP53 stabilization. Acts as a histone chaperone that facilitates deposition of histone H3.3. Acts as a targeting component of the chromatin remodeling complex ATRX:DAXX which has ATP-dependent DNA translocase activity and catalyzes the replication-independent deposition of histone H3.3 in pericentric DNA repeats outside S-phase and telomeres, and the in vitro remodeling of H3.3-containing nucleosomes. Does not affect the ATPase activity of ATRX but alleviates its transcription repression activity. Upon neuronal activation associates with regulatory elements of selected immediate early genes where it promotes deposition of histone H3.3 which may be linked to transcriptional induction of these genes. Required for the recruitment of histone H3.3:H4 dimers to PML-nuclear bodies (PML-NBs); the process is independent of ATRX and facilitated by ASF1A; PML-NBs are suggested to function as regulatory sites for the incorporation of newly synthesized histone H3.3 into chromatin. Proposed to mediate activation of the JNK pathway and apoptosis via MAP3K5 in response to signaling from TNFRSF6 and TGFBR2. Interaction with HSPB1/HSP27 may prevent interaction with TNFRSF6 and MAP3K5 and block DAXX-mediated apoptosis. In contrast, in lymphoid cells JNC activation and TNFRSF6-mediated apoptosis may not involve DAXX. Plays a role as a positive regulator of the heat shock transcription factor HSF1 activity during the stress protein response (By similarity).</text>
</comment>
<comment type="subunit">
    <text evidence="1 3">Homomultimer. Interacts (via C-terminus) with TNFRSF6 (via death domain). Interacts with PAX5, SLC2A4/GLUT4, MAP3K5, TGFBR2, phosphorylated dimeric HSPB1/HSP27, CENPC, ETS1, sumoylated PML, UBE2I, MCRS1 and TP53. Interacts (via N-terminus) with HIPK2 and HIPK3. Interacts with HIPK1, which induces translocation from PML/POD/ND10 nuclear bodies to chromatin and enhances association with HDAC1. Interacts (non-phosphorylated) with PAX3, PAX7, DEK, HDAC1, HDAC2, HDAC3, acetylated histone H4 and histones H2A, H2B, H3, H3.3 and H4. Interacts with SPOP; mediating CUL3-dependent proteasomal degradation. Interacts with CBP; the interaction is dependent the sumoylation of CBP and suppresses CBP transcriptional activity via recruitment of HDAC2 directly in the complex with TP53 and HIPK2. Interacts with AXIN1; the interaction stimulates the interaction of DAXX with TP53, stimulates 'Ser-46' phosphorylation of TP53 on and induces cell death on UV irradiation. Interacts with MDM2; the interaction is direct. Interacts with USP7; the interaction is direct and independent of MDM2 and TP53. Part of a complex with DAXX, MDM2 and USP7 under non-stress conditions. Interacts (via N-terminus) with RASSF1 (via C-terminus); the interaction is independent of MDM2 and TP53; RASSF1 isoform A disrupts interactions among MDM2, DAXX and USP7, thus contributing to the efficient activation of TP53 by promoting MDM2 self-ubiquitination in cell-cycle checkpoint control in response to DNA damage. Interacts with ATRX to form the chromatin remodeling complex ATRX:DAXX (By similarity). Interacts with HSF1 (via homotrimeric form preferentially); this interaction relieves homotrimeric HSF1 from repression of its transcriptional activity by HSP90-dependent multichaperone complex upon heat shock (By similarity).</text>
</comment>
<comment type="subcellular location">
    <subcellularLocation>
        <location evidence="3">Cytoplasm</location>
    </subcellularLocation>
    <subcellularLocation>
        <location evidence="3">Nucleus</location>
        <location evidence="3">Nucleoplasm</location>
    </subcellularLocation>
    <subcellularLocation>
        <location evidence="3">Nucleus</location>
        <location evidence="3">PML body</location>
    </subcellularLocation>
    <subcellularLocation>
        <location evidence="3">Nucleus</location>
        <location evidence="3">Nucleolus</location>
    </subcellularLocation>
    <subcellularLocation>
        <location evidence="3">Chromosome</location>
        <location evidence="3">Centromere</location>
    </subcellularLocation>
    <text evidence="3">Dispersed throughout the nucleoplasm, in PML/POD/ND10 nuclear bodies, and in nucleoli. Colocalizes with histone H3.3, ATRX, HIRA and ASF1A at PML-nuclear bodies. Colocalizes with a subset of interphase centromeres, but is absent from mitotic centromeres. Detected in cytoplasmic punctate structures. Translocates from the nucleus to the cytoplasm upon glucose deprivation or oxidative stress. Colocalizes with RASSF1 in the nucleus. Colocalizes with USP7 in nucleoplasma with accumulation in speckled structures.</text>
</comment>
<comment type="domain">
    <text evidence="1">The Sumo interaction motif mediates Sumo binding, and is required both for sumoylation and binding to sumoylated targets.</text>
</comment>
<comment type="PTM">
    <text evidence="1">Sumoylated with SUMO1 on multiple lysine residues.</text>
</comment>
<comment type="PTM">
    <text evidence="1">Repressor activity is down-regulated upon Ser-661 phosphorylation. Upon neuronal activation dephosphorylated by calcineurin in a Ca2+ dependent manner at Ser-661; dephosphorylation positively affects histone H3.3 loading and transcriptional activation (By similarity).</text>
</comment>
<comment type="PTM">
    <text evidence="1">Polyubiquitinated; which is promoted by CUL3 and SPOP and results in proteasomal degradation. Ubiquitinated by MDM2; inducing its degradation. Deubiquitinated by USP7; leading to stabilize it (By similarity).</text>
</comment>
<comment type="similarity">
    <text evidence="6">Belongs to the DAXX family.</text>
</comment>
<evidence type="ECO:0000250" key="1"/>
<evidence type="ECO:0000250" key="2">
    <source>
        <dbReference type="UniProtKB" id="O35613"/>
    </source>
</evidence>
<evidence type="ECO:0000250" key="3">
    <source>
        <dbReference type="UniProtKB" id="Q9UER7"/>
    </source>
</evidence>
<evidence type="ECO:0000255" key="4"/>
<evidence type="ECO:0000256" key="5">
    <source>
        <dbReference type="SAM" id="MobiDB-lite"/>
    </source>
</evidence>
<evidence type="ECO:0000305" key="6"/>
<evidence type="ECO:0007744" key="7">
    <source>
    </source>
</evidence>
<feature type="chain" id="PRO_0000151260" description="Death domain-associated protein 6">
    <location>
        <begin position="1"/>
        <end position="731"/>
    </location>
</feature>
<feature type="region of interest" description="Necessary for interaction with USP7 and ATRX" evidence="1">
    <location>
        <begin position="1"/>
        <end position="158"/>
    </location>
</feature>
<feature type="region of interest" description="Disordered" evidence="5">
    <location>
        <begin position="1"/>
        <end position="56"/>
    </location>
</feature>
<feature type="region of interest" description="Disordered" evidence="5">
    <location>
        <begin position="147"/>
        <end position="183"/>
    </location>
</feature>
<feature type="region of interest" description="Interaction with histone H3.3" evidence="1">
    <location>
        <begin position="181"/>
        <end position="414"/>
    </location>
</feature>
<feature type="region of interest" description="Necessary for interaction with USP7" evidence="1">
    <location>
        <begin position="345"/>
        <end position="560"/>
    </location>
</feature>
<feature type="region of interest" description="Disordered" evidence="5">
    <location>
        <begin position="381"/>
        <end position="639"/>
    </location>
</feature>
<feature type="region of interest" description="Interaction with SPOP" evidence="1">
    <location>
        <begin position="617"/>
        <end position="731"/>
    </location>
</feature>
<feature type="region of interest" description="Disordered" evidence="5">
    <location>
        <begin position="663"/>
        <end position="688"/>
    </location>
</feature>
<feature type="region of interest" description="Sumo interaction motif (SIM)" evidence="1">
    <location>
        <begin position="724"/>
        <end position="731"/>
    </location>
</feature>
<feature type="coiled-coil region" evidence="4">
    <location>
        <begin position="177"/>
        <end position="215"/>
    </location>
</feature>
<feature type="coiled-coil region" evidence="4">
    <location>
        <begin position="368"/>
        <end position="395"/>
    </location>
</feature>
<feature type="coiled-coil region" evidence="4">
    <location>
        <begin position="428"/>
        <end position="485"/>
    </location>
</feature>
<feature type="short sequence motif" description="Nuclear localization signal" evidence="4">
    <location>
        <begin position="391"/>
        <end position="395"/>
    </location>
</feature>
<feature type="short sequence motif" description="Nuclear localization signal" evidence="4">
    <location>
        <begin position="622"/>
        <end position="628"/>
    </location>
</feature>
<feature type="compositionally biased region" description="Low complexity" evidence="5">
    <location>
        <begin position="31"/>
        <end position="43"/>
    </location>
</feature>
<feature type="compositionally biased region" description="Polar residues" evidence="5">
    <location>
        <begin position="165"/>
        <end position="176"/>
    </location>
</feature>
<feature type="compositionally biased region" description="Polar residues" evidence="5">
    <location>
        <begin position="398"/>
        <end position="412"/>
    </location>
</feature>
<feature type="compositionally biased region" description="Acidic residues" evidence="5">
    <location>
        <begin position="432"/>
        <end position="482"/>
    </location>
</feature>
<feature type="compositionally biased region" description="Polar residues" evidence="5">
    <location>
        <begin position="499"/>
        <end position="509"/>
    </location>
</feature>
<feature type="compositionally biased region" description="Polar residues" evidence="5">
    <location>
        <begin position="599"/>
        <end position="608"/>
    </location>
</feature>
<feature type="compositionally biased region" description="Polar residues" evidence="5">
    <location>
        <begin position="672"/>
        <end position="688"/>
    </location>
</feature>
<feature type="modified residue" description="Phosphoserine" evidence="3">
    <location>
        <position position="25"/>
    </location>
</feature>
<feature type="modified residue" description="Phosphoserine" evidence="3">
    <location>
        <position position="211"/>
    </location>
</feature>
<feature type="modified residue" description="Phosphoserine" evidence="3">
    <location>
        <position position="409"/>
    </location>
</feature>
<feature type="modified residue" description="Phosphoserine" evidence="3">
    <location>
        <position position="421"/>
    </location>
</feature>
<feature type="modified residue" description="Phosphothreonine" evidence="2">
    <location>
        <position position="456"/>
    </location>
</feature>
<feature type="modified residue" description="Phosphoserine" evidence="3">
    <location>
        <position position="485"/>
    </location>
</feature>
<feature type="modified residue" description="Phosphoserine" evidence="7">
    <location>
        <position position="488"/>
    </location>
</feature>
<feature type="modified residue" description="Phosphoserine" evidence="7">
    <location>
        <position position="490"/>
    </location>
</feature>
<feature type="modified residue" description="Phosphoserine" evidence="2">
    <location>
        <position position="499"/>
    </location>
</feature>
<feature type="modified residue" description="N6-acetyllysine" evidence="3">
    <location>
        <position position="503"/>
    </location>
</feature>
<feature type="modified residue" description="Phosphoserine" evidence="7">
    <location>
        <position position="527"/>
    </location>
</feature>
<feature type="modified residue" description="Phosphoserine" evidence="7">
    <location>
        <position position="551"/>
    </location>
</feature>
<feature type="modified residue" description="Phosphoserine" evidence="7">
    <location>
        <position position="571"/>
    </location>
</feature>
<feature type="modified residue" description="Phosphoserine" evidence="2">
    <location>
        <position position="617"/>
    </location>
</feature>
<feature type="modified residue" description="Phosphoserine" evidence="2">
    <location>
        <position position="661"/>
    </location>
</feature>
<feature type="modified residue" description="Phosphoserine" evidence="3">
    <location>
        <position position="662"/>
    </location>
</feature>
<feature type="modified residue" description="Phosphoserine" evidence="3">
    <location>
        <position position="679"/>
    </location>
</feature>
<feature type="modified residue" description="Phosphoserine" evidence="3">
    <location>
        <position position="693"/>
    </location>
</feature>
<feature type="modified residue" description="Phosphoserine" evidence="3">
    <location>
        <position position="728"/>
    </location>
</feature>
<feature type="modified residue" description="Phosphoserine" evidence="3">
    <location>
        <position position="730"/>
    </location>
</feature>
<feature type="cross-link" description="Glycyl lysine isopeptide (Lys-Gly) (interchain with G-Cter in SUMO2)" evidence="3">
    <location>
        <position position="142"/>
    </location>
</feature>
<feature type="cross-link" description="Glycyl lysine isopeptide (Lys-Gly) (interchain with G-Cter in SUMO1)" evidence="3">
    <location>
        <position position="621"/>
    </location>
</feature>
<keyword id="KW-0007">Acetylation</keyword>
<keyword id="KW-0053">Apoptosis</keyword>
<keyword id="KW-0137">Centromere</keyword>
<keyword id="KW-0143">Chaperone</keyword>
<keyword id="KW-0156">Chromatin regulator</keyword>
<keyword id="KW-0158">Chromosome</keyword>
<keyword id="KW-0175">Coiled coil</keyword>
<keyword id="KW-0963">Cytoplasm</keyword>
<keyword id="KW-1017">Isopeptide bond</keyword>
<keyword id="KW-0539">Nucleus</keyword>
<keyword id="KW-0597">Phosphoprotein</keyword>
<keyword id="KW-1185">Reference proteome</keyword>
<keyword id="KW-0678">Repressor</keyword>
<keyword id="KW-0804">Transcription</keyword>
<keyword id="KW-0805">Transcription regulation</keyword>
<keyword id="KW-0832">Ubl conjugation</keyword>
<proteinExistence type="evidence at protein level"/>
<accession>Q8VIB2</accession>
<gene>
    <name type="primary">Daxx</name>
</gene>
<name>DAXX_RAT</name>
<dbReference type="EMBL" id="AB064671">
    <property type="protein sequence ID" value="BAB83524.1"/>
    <property type="molecule type" value="mRNA"/>
</dbReference>
<dbReference type="BMRB" id="Q8VIB2"/>
<dbReference type="SMR" id="Q8VIB2"/>
<dbReference type="FunCoup" id="Q8VIB2">
    <property type="interactions" value="1110"/>
</dbReference>
<dbReference type="IntAct" id="Q8VIB2">
    <property type="interactions" value="4"/>
</dbReference>
<dbReference type="MINT" id="Q8VIB2"/>
<dbReference type="STRING" id="10116.ENSRNOP00000000559"/>
<dbReference type="iPTMnet" id="Q8VIB2"/>
<dbReference type="PhosphoSitePlus" id="Q8VIB2"/>
<dbReference type="PaxDb" id="10116-ENSRNOP00000000559"/>
<dbReference type="UCSC" id="RGD:621227">
    <property type="organism name" value="rat"/>
</dbReference>
<dbReference type="AGR" id="RGD:621227"/>
<dbReference type="RGD" id="621227">
    <property type="gene designation" value="Daxx"/>
</dbReference>
<dbReference type="eggNOG" id="ENOG502QRS6">
    <property type="taxonomic scope" value="Eukaryota"/>
</dbReference>
<dbReference type="InParanoid" id="Q8VIB2"/>
<dbReference type="PhylomeDB" id="Q8VIB2"/>
<dbReference type="Reactome" id="R-RNO-3899300">
    <property type="pathway name" value="SUMOylation of transcription cofactors"/>
</dbReference>
<dbReference type="Reactome" id="R-RNO-6804757">
    <property type="pathway name" value="Regulation of TP53 Degradation"/>
</dbReference>
<dbReference type="PRO" id="PR:Q8VIB2"/>
<dbReference type="Proteomes" id="UP000002494">
    <property type="component" value="Unplaced"/>
</dbReference>
<dbReference type="GO" id="GO:0044297">
    <property type="term" value="C:cell body"/>
    <property type="evidence" value="ECO:0000314"/>
    <property type="project" value="RGD"/>
</dbReference>
<dbReference type="GO" id="GO:0005938">
    <property type="term" value="C:cell cortex"/>
    <property type="evidence" value="ECO:0000314"/>
    <property type="project" value="RGD"/>
</dbReference>
<dbReference type="GO" id="GO:0000775">
    <property type="term" value="C:chromosome, centromeric region"/>
    <property type="evidence" value="ECO:0000266"/>
    <property type="project" value="RGD"/>
</dbReference>
<dbReference type="GO" id="GO:0005829">
    <property type="term" value="C:cytosol"/>
    <property type="evidence" value="ECO:0000250"/>
    <property type="project" value="UniProtKB"/>
</dbReference>
<dbReference type="GO" id="GO:0000792">
    <property type="term" value="C:heterochromatin"/>
    <property type="evidence" value="ECO:0000266"/>
    <property type="project" value="RGD"/>
</dbReference>
<dbReference type="GO" id="GO:0005874">
    <property type="term" value="C:microtubule"/>
    <property type="evidence" value="ECO:0000314"/>
    <property type="project" value="RGD"/>
</dbReference>
<dbReference type="GO" id="GO:0005730">
    <property type="term" value="C:nucleolus"/>
    <property type="evidence" value="ECO:0007669"/>
    <property type="project" value="UniProtKB-SubCell"/>
</dbReference>
<dbReference type="GO" id="GO:0005634">
    <property type="term" value="C:nucleus"/>
    <property type="evidence" value="ECO:0000250"/>
    <property type="project" value="UniProtKB"/>
</dbReference>
<dbReference type="GO" id="GO:0016605">
    <property type="term" value="C:PML body"/>
    <property type="evidence" value="ECO:0000314"/>
    <property type="project" value="RGD"/>
</dbReference>
<dbReference type="GO" id="GO:0001741">
    <property type="term" value="C:XY body"/>
    <property type="evidence" value="ECO:0000314"/>
    <property type="project" value="RGD"/>
</dbReference>
<dbReference type="GO" id="GO:0019899">
    <property type="term" value="F:enzyme binding"/>
    <property type="evidence" value="ECO:0000266"/>
    <property type="project" value="RGD"/>
</dbReference>
<dbReference type="GO" id="GO:0042393">
    <property type="term" value="F:histone binding"/>
    <property type="evidence" value="ECO:0000266"/>
    <property type="project" value="RGD"/>
</dbReference>
<dbReference type="GO" id="GO:0008432">
    <property type="term" value="F:JUN kinase binding"/>
    <property type="evidence" value="ECO:0000353"/>
    <property type="project" value="RGD"/>
</dbReference>
<dbReference type="GO" id="GO:0019894">
    <property type="term" value="F:kinesin binding"/>
    <property type="evidence" value="ECO:0000353"/>
    <property type="project" value="RGD"/>
</dbReference>
<dbReference type="GO" id="GO:0140693">
    <property type="term" value="F:molecular condensate scaffold activity"/>
    <property type="evidence" value="ECO:0000266"/>
    <property type="project" value="RGD"/>
</dbReference>
<dbReference type="GO" id="GO:0050681">
    <property type="term" value="F:nuclear androgen receptor binding"/>
    <property type="evidence" value="ECO:0000353"/>
    <property type="project" value="RGD"/>
</dbReference>
<dbReference type="GO" id="GO:0002039">
    <property type="term" value="F:p53 binding"/>
    <property type="evidence" value="ECO:0000266"/>
    <property type="project" value="RGD"/>
</dbReference>
<dbReference type="GO" id="GO:0042803">
    <property type="term" value="F:protein homodimerization activity"/>
    <property type="evidence" value="ECO:0000250"/>
    <property type="project" value="UniProtKB"/>
</dbReference>
<dbReference type="GO" id="GO:0030295">
    <property type="term" value="F:protein kinase activator activity"/>
    <property type="evidence" value="ECO:0000266"/>
    <property type="project" value="RGD"/>
</dbReference>
<dbReference type="GO" id="GO:0019901">
    <property type="term" value="F:protein kinase binding"/>
    <property type="evidence" value="ECO:0000353"/>
    <property type="project" value="RGD"/>
</dbReference>
<dbReference type="GO" id="GO:0061629">
    <property type="term" value="F:RNA polymerase II-specific DNA-binding transcription factor binding"/>
    <property type="evidence" value="ECO:0000250"/>
    <property type="project" value="UniProtKB"/>
</dbReference>
<dbReference type="GO" id="GO:0003713">
    <property type="term" value="F:transcription coactivator activity"/>
    <property type="evidence" value="ECO:0000250"/>
    <property type="project" value="UniProtKB"/>
</dbReference>
<dbReference type="GO" id="GO:0003714">
    <property type="term" value="F:transcription corepressor activity"/>
    <property type="evidence" value="ECO:0000266"/>
    <property type="project" value="RGD"/>
</dbReference>
<dbReference type="GO" id="GO:0140416">
    <property type="term" value="F:transcription regulator inhibitor activity"/>
    <property type="evidence" value="ECO:0000266"/>
    <property type="project" value="RGD"/>
</dbReference>
<dbReference type="GO" id="GO:0031625">
    <property type="term" value="F:ubiquitin protein ligase binding"/>
    <property type="evidence" value="ECO:0000266"/>
    <property type="project" value="RGD"/>
</dbReference>
<dbReference type="GO" id="GO:0030521">
    <property type="term" value="P:androgen receptor signaling pathway"/>
    <property type="evidence" value="ECO:0000266"/>
    <property type="project" value="RGD"/>
</dbReference>
<dbReference type="GO" id="GO:0097190">
    <property type="term" value="P:apoptotic signaling pathway"/>
    <property type="evidence" value="ECO:0000266"/>
    <property type="project" value="RGD"/>
</dbReference>
<dbReference type="GO" id="GO:0008283">
    <property type="term" value="P:cell population proliferation"/>
    <property type="evidence" value="ECO:0000266"/>
    <property type="project" value="RGD"/>
</dbReference>
<dbReference type="GO" id="GO:0071276">
    <property type="term" value="P:cellular response to cadmium ion"/>
    <property type="evidence" value="ECO:0000250"/>
    <property type="project" value="UniProtKB"/>
</dbReference>
<dbReference type="GO" id="GO:0071280">
    <property type="term" value="P:cellular response to copper ion"/>
    <property type="evidence" value="ECO:0000250"/>
    <property type="project" value="UniProtKB"/>
</dbReference>
<dbReference type="GO" id="GO:0072738">
    <property type="term" value="P:cellular response to diamide"/>
    <property type="evidence" value="ECO:0000250"/>
    <property type="project" value="UniProtKB"/>
</dbReference>
<dbReference type="GO" id="GO:0034605">
    <property type="term" value="P:cellular response to heat"/>
    <property type="evidence" value="ECO:0000250"/>
    <property type="project" value="UniProtKB"/>
</dbReference>
<dbReference type="GO" id="GO:0070301">
    <property type="term" value="P:cellular response to hydrogen peroxide"/>
    <property type="evidence" value="ECO:0000270"/>
    <property type="project" value="RGD"/>
</dbReference>
<dbReference type="GO" id="GO:1903936">
    <property type="term" value="P:cellular response to sodium arsenite"/>
    <property type="evidence" value="ECO:0000250"/>
    <property type="project" value="UniProtKB"/>
</dbReference>
<dbReference type="GO" id="GO:0071356">
    <property type="term" value="P:cellular response to tumor necrosis factor"/>
    <property type="evidence" value="ECO:0000270"/>
    <property type="project" value="RGD"/>
</dbReference>
<dbReference type="GO" id="GO:0071346">
    <property type="term" value="P:cellular response to type II interferon"/>
    <property type="evidence" value="ECO:0000315"/>
    <property type="project" value="RGD"/>
</dbReference>
<dbReference type="GO" id="GO:0034620">
    <property type="term" value="P:cellular response to unfolded protein"/>
    <property type="evidence" value="ECO:0000250"/>
    <property type="project" value="UniProtKB"/>
</dbReference>
<dbReference type="GO" id="GO:0006338">
    <property type="term" value="P:chromatin remodeling"/>
    <property type="evidence" value="ECO:0000266"/>
    <property type="project" value="RGD"/>
</dbReference>
<dbReference type="GO" id="GO:0008625">
    <property type="term" value="P:extrinsic apoptotic signaling pathway via death domain receptors"/>
    <property type="evidence" value="ECO:0000266"/>
    <property type="project" value="RGD"/>
</dbReference>
<dbReference type="GO" id="GO:0007254">
    <property type="term" value="P:JNK cascade"/>
    <property type="evidence" value="ECO:0000266"/>
    <property type="project" value="RGD"/>
</dbReference>
<dbReference type="GO" id="GO:0000281">
    <property type="term" value="P:mitotic cytokinesis"/>
    <property type="evidence" value="ECO:0000266"/>
    <property type="project" value="RGD"/>
</dbReference>
<dbReference type="GO" id="GO:0043066">
    <property type="term" value="P:negative regulation of apoptotic process"/>
    <property type="evidence" value="ECO:0000266"/>
    <property type="project" value="RGD"/>
</dbReference>
<dbReference type="GO" id="GO:1900038">
    <property type="term" value="P:negative regulation of cellular response to hypoxia"/>
    <property type="evidence" value="ECO:0000315"/>
    <property type="project" value="RGD"/>
</dbReference>
<dbReference type="GO" id="GO:0045892">
    <property type="term" value="P:negative regulation of DNA-templated transcription"/>
    <property type="evidence" value="ECO:0000266"/>
    <property type="project" value="RGD"/>
</dbReference>
<dbReference type="GO" id="GO:0010629">
    <property type="term" value="P:negative regulation of gene expression"/>
    <property type="evidence" value="ECO:0000250"/>
    <property type="project" value="UniProtKB"/>
</dbReference>
<dbReference type="GO" id="GO:0010832">
    <property type="term" value="P:negative regulation of myotube differentiation"/>
    <property type="evidence" value="ECO:0000314"/>
    <property type="project" value="RGD"/>
</dbReference>
<dbReference type="GO" id="GO:0000122">
    <property type="term" value="P:negative regulation of transcription by RNA polymerase II"/>
    <property type="evidence" value="ECO:0000314"/>
    <property type="project" value="RGD"/>
</dbReference>
<dbReference type="GO" id="GO:0036480">
    <property type="term" value="P:neuron intrinsic apoptotic signaling pathway in response to oxidative stress"/>
    <property type="evidence" value="ECO:0000266"/>
    <property type="project" value="RGD"/>
</dbReference>
<dbReference type="GO" id="GO:0006334">
    <property type="term" value="P:nucleosome assembly"/>
    <property type="evidence" value="ECO:0000266"/>
    <property type="project" value="RGD"/>
</dbReference>
<dbReference type="GO" id="GO:0030578">
    <property type="term" value="P:PML body organization"/>
    <property type="evidence" value="ECO:0000315"/>
    <property type="project" value="RGD"/>
</dbReference>
<dbReference type="GO" id="GO:0043065">
    <property type="term" value="P:positive regulation of apoptotic process"/>
    <property type="evidence" value="ECO:0000315"/>
    <property type="project" value="RGD"/>
</dbReference>
<dbReference type="GO" id="GO:2001235">
    <property type="term" value="P:positive regulation of apoptotic signaling pathway"/>
    <property type="evidence" value="ECO:0000266"/>
    <property type="project" value="RGD"/>
</dbReference>
<dbReference type="GO" id="GO:0045944">
    <property type="term" value="P:positive regulation of transcription by RNA polymerase II"/>
    <property type="evidence" value="ECO:0000266"/>
    <property type="project" value="RGD"/>
</dbReference>
<dbReference type="GO" id="GO:0071168">
    <property type="term" value="P:protein localization to chromatin"/>
    <property type="evidence" value="ECO:0000266"/>
    <property type="project" value="RGD"/>
</dbReference>
<dbReference type="GO" id="GO:0042981">
    <property type="term" value="P:regulation of apoptotic process"/>
    <property type="evidence" value="ECO:0000318"/>
    <property type="project" value="GO_Central"/>
</dbReference>
<dbReference type="GO" id="GO:0006355">
    <property type="term" value="P:regulation of DNA-templated transcription"/>
    <property type="evidence" value="ECO:0000266"/>
    <property type="project" value="RGD"/>
</dbReference>
<dbReference type="GO" id="GO:0010468">
    <property type="term" value="P:regulation of gene expression"/>
    <property type="evidence" value="ECO:0000266"/>
    <property type="project" value="RGD"/>
</dbReference>
<dbReference type="GO" id="GO:0040014">
    <property type="term" value="P:regulation of multicellular organism growth"/>
    <property type="evidence" value="ECO:0000266"/>
    <property type="project" value="RGD"/>
</dbReference>
<dbReference type="GO" id="GO:0031396">
    <property type="term" value="P:regulation of protein ubiquitination"/>
    <property type="evidence" value="ECO:0000250"/>
    <property type="project" value="UniProtKB"/>
</dbReference>
<dbReference type="GO" id="GO:0010038">
    <property type="term" value="P:response to metal ion"/>
    <property type="evidence" value="ECO:0000270"/>
    <property type="project" value="RGD"/>
</dbReference>
<dbReference type="CDD" id="cd13151">
    <property type="entry name" value="DAXX_helical_bundle"/>
    <property type="match status" value="1"/>
</dbReference>
<dbReference type="CDD" id="cd13150">
    <property type="entry name" value="DAXX_histone_binding"/>
    <property type="match status" value="1"/>
</dbReference>
<dbReference type="FunFam" id="1.10.8.810:FF:000001">
    <property type="entry name" value="Death domain-associated protein 6"/>
    <property type="match status" value="1"/>
</dbReference>
<dbReference type="FunFam" id="1.20.58.2170:FF:000001">
    <property type="entry name" value="Death domain-associated protein 6"/>
    <property type="match status" value="1"/>
</dbReference>
<dbReference type="Gene3D" id="1.20.58.2170">
    <property type="match status" value="1"/>
</dbReference>
<dbReference type="Gene3D" id="1.10.8.810">
    <property type="entry name" value="Daxx helical bundle domain"/>
    <property type="match status" value="1"/>
</dbReference>
<dbReference type="InterPro" id="IPR046378">
    <property type="entry name" value="DAXX_histone-bd"/>
</dbReference>
<dbReference type="InterPro" id="IPR046426">
    <property type="entry name" value="DAXX_histone-bd_sf"/>
</dbReference>
<dbReference type="InterPro" id="IPR031333">
    <property type="entry name" value="Daxx_N"/>
</dbReference>
<dbReference type="InterPro" id="IPR038298">
    <property type="entry name" value="Daxx_N_sf"/>
</dbReference>
<dbReference type="PANTHER" id="PTHR12766:SF7">
    <property type="entry name" value="DEATH DOMAIN-ASSOCIATED PROTEIN 6"/>
    <property type="match status" value="1"/>
</dbReference>
<dbReference type="PANTHER" id="PTHR12766">
    <property type="entry name" value="DEATH DOMAIN-ASSOCIATED PROTEIN 6 DAXX"/>
    <property type="match status" value="1"/>
</dbReference>
<dbReference type="Pfam" id="PF03344">
    <property type="entry name" value="Daxx"/>
    <property type="match status" value="1"/>
</dbReference>
<dbReference type="Pfam" id="PF20920">
    <property type="entry name" value="DAXX_hist_bd"/>
    <property type="match status" value="1"/>
</dbReference>